<reference key="1">
    <citation type="journal article" date="2003" name="PLoS Biol.">
        <title>The genome sequence of Caenorhabditis briggsae: a platform for comparative genomics.</title>
        <authorList>
            <person name="Stein L.D."/>
            <person name="Bao Z."/>
            <person name="Blasiar D."/>
            <person name="Blumenthal T."/>
            <person name="Brent M.R."/>
            <person name="Chen N."/>
            <person name="Chinwalla A."/>
            <person name="Clarke L."/>
            <person name="Clee C."/>
            <person name="Coghlan A."/>
            <person name="Coulson A."/>
            <person name="D'Eustachio P."/>
            <person name="Fitch D.H.A."/>
            <person name="Fulton L.A."/>
            <person name="Fulton R.E."/>
            <person name="Griffiths-Jones S."/>
            <person name="Harris T.W."/>
            <person name="Hillier L.W."/>
            <person name="Kamath R."/>
            <person name="Kuwabara P.E."/>
            <person name="Mardis E.R."/>
            <person name="Marra M.A."/>
            <person name="Miner T.L."/>
            <person name="Minx P."/>
            <person name="Mullikin J.C."/>
            <person name="Plumb R.W."/>
            <person name="Rogers J."/>
            <person name="Schein J.E."/>
            <person name="Sohrmann M."/>
            <person name="Spieth J."/>
            <person name="Stajich J.E."/>
            <person name="Wei C."/>
            <person name="Willey D."/>
            <person name="Wilson R.K."/>
            <person name="Durbin R.M."/>
            <person name="Waterston R.H."/>
        </authorList>
    </citation>
    <scope>NUCLEOTIDE SEQUENCE [LARGE SCALE GENOMIC DNA]</scope>
    <source>
        <strain>AF16</strain>
    </source>
</reference>
<accession>Q61DH4</accession>
<accession>A8XFV3</accession>
<evidence type="ECO:0000250" key="1"/>
<evidence type="ECO:0000255" key="2"/>
<evidence type="ECO:0000305" key="3"/>
<gene>
    <name type="primary">mrpl-24</name>
    <name type="ORF">CBG12482</name>
</gene>
<comment type="subcellular location">
    <subcellularLocation>
        <location evidence="1">Mitochondrion</location>
    </subcellularLocation>
</comment>
<comment type="similarity">
    <text evidence="3">Belongs to the universal ribosomal protein uL24 family.</text>
</comment>
<name>RM24_CAEBR</name>
<organism>
    <name type="scientific">Caenorhabditis briggsae</name>
    <dbReference type="NCBI Taxonomy" id="6238"/>
    <lineage>
        <taxon>Eukaryota</taxon>
        <taxon>Metazoa</taxon>
        <taxon>Ecdysozoa</taxon>
        <taxon>Nematoda</taxon>
        <taxon>Chromadorea</taxon>
        <taxon>Rhabditida</taxon>
        <taxon>Rhabditina</taxon>
        <taxon>Rhabditomorpha</taxon>
        <taxon>Rhabditoidea</taxon>
        <taxon>Rhabditidae</taxon>
        <taxon>Peloderinae</taxon>
        <taxon>Caenorhabditis</taxon>
    </lineage>
</organism>
<proteinExistence type="inferred from homology"/>
<sequence>MITSRVLRFPRKPFVDLDYSRHMPAAYVERTKRTVPRKVFGDRFGAPDIKMYYVHPDDYLPSHRRPWEDKQLSSHLQRSDKYFSAQLSNKYFELRRPKSERMPDTEWTFFPGDLVQVMVGKDKGRQGLVLTISRDSSEVVVDGLHTRLGEDMEGSEKLGVDKTLRWQEQPLSVSKKQVMLVDPNDENPCEARWQLNASADEYIRVSTRSGYEIPIPSQAKVTYEYLQPENYIEVEGKDTPSDAVLERTYMPRVASFEQEIMEEMGIKEDRTPKPTFWY</sequence>
<feature type="transit peptide" description="Mitochondrion" evidence="2">
    <location>
        <begin position="1"/>
        <end status="unknown"/>
    </location>
</feature>
<feature type="chain" id="PRO_0000270493" description="Large ribosomal subunit protein uL24m">
    <location>
        <begin status="unknown"/>
        <end position="278"/>
    </location>
</feature>
<feature type="domain" description="KOW">
    <location>
        <begin position="109"/>
        <end position="142"/>
    </location>
</feature>
<keyword id="KW-0496">Mitochondrion</keyword>
<keyword id="KW-1185">Reference proteome</keyword>
<keyword id="KW-0687">Ribonucleoprotein</keyword>
<keyword id="KW-0689">Ribosomal protein</keyword>
<keyword id="KW-0809">Transit peptide</keyword>
<dbReference type="EMBL" id="HE600940">
    <property type="protein sequence ID" value="CAP31457.1"/>
    <property type="molecule type" value="Genomic_DNA"/>
</dbReference>
<dbReference type="SMR" id="Q61DH4"/>
<dbReference type="FunCoup" id="Q61DH4">
    <property type="interactions" value="1782"/>
</dbReference>
<dbReference type="STRING" id="6238.Q61DH4"/>
<dbReference type="EnsemblMetazoa" id="CBG12482.1">
    <property type="protein sequence ID" value="CBG12482.1"/>
    <property type="gene ID" value="WBGene00033427"/>
</dbReference>
<dbReference type="KEGG" id="cbr:CBG_12482"/>
<dbReference type="CTD" id="8582006"/>
<dbReference type="WormBase" id="CBG12482">
    <property type="protein sequence ID" value="CBP03149"/>
    <property type="gene ID" value="WBGene00033427"/>
    <property type="gene designation" value="Cbr-mrpl-24"/>
</dbReference>
<dbReference type="eggNOG" id="KOG1708">
    <property type="taxonomic scope" value="Eukaryota"/>
</dbReference>
<dbReference type="HOGENOM" id="CLU_998548_0_0_1"/>
<dbReference type="InParanoid" id="Q61DH4"/>
<dbReference type="OMA" id="WTLHPDD"/>
<dbReference type="OrthoDB" id="262547at2759"/>
<dbReference type="Proteomes" id="UP000008549">
    <property type="component" value="Unassembled WGS sequence"/>
</dbReference>
<dbReference type="GO" id="GO:0005739">
    <property type="term" value="C:mitochondrion"/>
    <property type="evidence" value="ECO:0000318"/>
    <property type="project" value="GO_Central"/>
</dbReference>
<dbReference type="GO" id="GO:1990904">
    <property type="term" value="C:ribonucleoprotein complex"/>
    <property type="evidence" value="ECO:0007669"/>
    <property type="project" value="UniProtKB-KW"/>
</dbReference>
<dbReference type="GO" id="GO:0005840">
    <property type="term" value="C:ribosome"/>
    <property type="evidence" value="ECO:0007669"/>
    <property type="project" value="UniProtKB-KW"/>
</dbReference>
<dbReference type="GO" id="GO:0003723">
    <property type="term" value="F:RNA binding"/>
    <property type="evidence" value="ECO:0007669"/>
    <property type="project" value="InterPro"/>
</dbReference>
<dbReference type="GO" id="GO:0003735">
    <property type="term" value="F:structural constituent of ribosome"/>
    <property type="evidence" value="ECO:0007669"/>
    <property type="project" value="InterPro"/>
</dbReference>
<dbReference type="GO" id="GO:0006412">
    <property type="term" value="P:translation"/>
    <property type="evidence" value="ECO:0000318"/>
    <property type="project" value="GO_Central"/>
</dbReference>
<dbReference type="CDD" id="cd06089">
    <property type="entry name" value="KOW_RPL26"/>
    <property type="match status" value="1"/>
</dbReference>
<dbReference type="FunFam" id="2.30.30.30:FF:000088">
    <property type="entry name" value="Probable 39S ribosomal protein L24, mitochondrial"/>
    <property type="match status" value="1"/>
</dbReference>
<dbReference type="Gene3D" id="2.30.30.30">
    <property type="match status" value="1"/>
</dbReference>
<dbReference type="InterPro" id="IPR005824">
    <property type="entry name" value="KOW"/>
</dbReference>
<dbReference type="InterPro" id="IPR014722">
    <property type="entry name" value="Rib_uL2_dom2"/>
</dbReference>
<dbReference type="InterPro" id="IPR003256">
    <property type="entry name" value="Ribosomal_uL24"/>
</dbReference>
<dbReference type="InterPro" id="IPR005825">
    <property type="entry name" value="Ribosomal_uL24_CS"/>
</dbReference>
<dbReference type="InterPro" id="IPR041988">
    <property type="entry name" value="Ribosomal_uL24_KOW"/>
</dbReference>
<dbReference type="InterPro" id="IPR008991">
    <property type="entry name" value="Translation_prot_SH3-like_sf"/>
</dbReference>
<dbReference type="PANTHER" id="PTHR12903">
    <property type="entry name" value="MITOCHONDRIAL RIBOSOMAL PROTEIN L24"/>
    <property type="match status" value="1"/>
</dbReference>
<dbReference type="Pfam" id="PF00467">
    <property type="entry name" value="KOW"/>
    <property type="match status" value="1"/>
</dbReference>
<dbReference type="SMART" id="SM00739">
    <property type="entry name" value="KOW"/>
    <property type="match status" value="1"/>
</dbReference>
<dbReference type="SUPFAM" id="SSF50104">
    <property type="entry name" value="Translation proteins SH3-like domain"/>
    <property type="match status" value="1"/>
</dbReference>
<dbReference type="PROSITE" id="PS01108">
    <property type="entry name" value="RIBOSOMAL_L24"/>
    <property type="match status" value="1"/>
</dbReference>
<protein>
    <recommendedName>
        <fullName evidence="3">Large ribosomal subunit protein uL24m</fullName>
    </recommendedName>
    <alternativeName>
        <fullName evidence="3">39S ribosomal protein L24, mitochondrial</fullName>
        <shortName>L24mt</shortName>
        <shortName>MRP-L24</shortName>
    </alternativeName>
</protein>